<name>SEC31_LODEL</name>
<sequence>MVKIGEINRTSTFAWSLDALPLLATGTVAGAVDINFTSSATLEIWEIFSPTKKNEPIFTASVEHKFYALAWSKPFENRPKGLIAGAFEDGTVEFWDADVLIKSKNLKKASVHKSTKHSGGAVKSLQFNPIQHHVLVTGGSNGQIFVWDTKTFGEPFSPGQAMTPMDEISCVAWNNSVSHILASTGNSGYTSIWDLKSKKEVLHLSYTGATGKANFSHVAWHPTKSTKLVTASDSESCPVILTWDLRNSNAPEKVMEGHKKGVLSLDWCKQDPELLISSGKDNATILWNPIEGKKLGEYPTTANWAFKTRFAPSAPDIFATASFDGKIIVQTIQDTSPPVSTKVSASHDDNEFWSELSVTETQQPVFEVKQAPIWLKNPVSVSFGFGSKLVVVGKDANGKSTLKVTKFLVKGHERAENLLKHLKSENYDAIVDYHLQGPAINEQDKSDWEVLKSLSKNGKQGLFDDEEDGSDTTEEKKNSANKEDADADATTKDKDIENGKDGKDDTANAANDGDGDDDFFAHLGNGSTRQTVETYSPSGDFDIYNSQTSKSDKKLTKLILKNKIDDAVDSCLEQDNLLEALVLALDSSAQVKEKVKNAYFSKHKESSLARVIYNATEKNVTDLVAHANVKNWKDIALGISAFATDSEEYSSKISELGDRILHHDKSARDEAITCYIAGGALDKIANLWLQELPQYEADLLKTDDKNISSPSEARLQALTSFVEKIETFKYYAKLGSVLSGPLVEPISKTILEFVNLISGAGEFELANKLLMLLPGDIAGVEKERISKATGKDTKPIVSEGSAARASVSSSKYSKIPRKSLTSANANANANANVNSNASSTGALPTPATNILPPLANHHIQGQTPSFVQPQPQTAFGQLPTPSTSSAYPTAPVAKSNPYAKPNPYTPNNIYKTSPVPQPSVAPQASFSGTAPPPPPAVQKANSKERMERLARNI</sequence>
<organism>
    <name type="scientific">Lodderomyces elongisporus (strain ATCC 11503 / CBS 2605 / JCM 1781 / NBRC 1676 / NRRL YB-4239)</name>
    <name type="common">Yeast</name>
    <name type="synonym">Saccharomyces elongisporus</name>
    <dbReference type="NCBI Taxonomy" id="379508"/>
    <lineage>
        <taxon>Eukaryota</taxon>
        <taxon>Fungi</taxon>
        <taxon>Dikarya</taxon>
        <taxon>Ascomycota</taxon>
        <taxon>Saccharomycotina</taxon>
        <taxon>Pichiomycetes</taxon>
        <taxon>Debaryomycetaceae</taxon>
        <taxon>Candida/Lodderomyces clade</taxon>
        <taxon>Lodderomyces</taxon>
    </lineage>
</organism>
<accession>A5DTX3</accession>
<protein>
    <recommendedName>
        <fullName>Protein transport protein SEC31</fullName>
    </recommendedName>
</protein>
<comment type="function">
    <text evidence="1">Component of the coat protein complex II (COPII) which promotes the formation of transport vesicles from the endoplasmic reticulum (ER). The coat has two main functions, the physical deformation of the endoplasmic reticulum membrane into vesicles and the selection of cargo molecules (By similarity).</text>
</comment>
<comment type="subunit">
    <text evidence="1">The COPII coat is composed of at least 5 proteins: the SEC23/24 complex, the SEC13/31 complex, and the protein SAR1. SEC13 and SEC31 make a 2:2 tetramer that forms the edge element of the COPII outer coat. The tetramer self-assembles in multiple copies to form the complete polyhedral cage. Interacts (via WD 8) with SEC13 (By similarity).</text>
</comment>
<comment type="subcellular location">
    <subcellularLocation>
        <location evidence="1">Cytoplasmic vesicle</location>
        <location evidence="1">COPII-coated vesicle membrane</location>
        <topology evidence="1">Peripheral membrane protein</topology>
        <orientation evidence="1">Cytoplasmic side</orientation>
    </subcellularLocation>
    <subcellularLocation>
        <location evidence="1">Endoplasmic reticulum membrane</location>
        <topology evidence="1">Peripheral membrane protein</topology>
        <orientation evidence="1">Cytoplasmic side</orientation>
    </subcellularLocation>
</comment>
<comment type="similarity">
    <text evidence="4">Belongs to the WD repeat SEC31 family.</text>
</comment>
<proteinExistence type="inferred from homology"/>
<gene>
    <name type="primary">SEC31</name>
    <name type="ORF">LELG_00809</name>
</gene>
<evidence type="ECO:0000250" key="1"/>
<evidence type="ECO:0000255" key="2">
    <source>
        <dbReference type="PROSITE-ProRule" id="PRU00221"/>
    </source>
</evidence>
<evidence type="ECO:0000256" key="3">
    <source>
        <dbReference type="SAM" id="MobiDB-lite"/>
    </source>
</evidence>
<evidence type="ECO:0000305" key="4"/>
<dbReference type="EMBL" id="CH981524">
    <property type="protein sequence ID" value="EDK42631.1"/>
    <property type="molecule type" value="Genomic_DNA"/>
</dbReference>
<dbReference type="RefSeq" id="XP_001528289.1">
    <property type="nucleotide sequence ID" value="XM_001528239.1"/>
</dbReference>
<dbReference type="SMR" id="A5DTX3"/>
<dbReference type="FunCoup" id="A5DTX3">
    <property type="interactions" value="704"/>
</dbReference>
<dbReference type="STRING" id="379508.A5DTX3"/>
<dbReference type="GeneID" id="5235378"/>
<dbReference type="KEGG" id="lel:PVL30_000777"/>
<dbReference type="VEuPathDB" id="FungiDB:LELG_00809"/>
<dbReference type="eggNOG" id="KOG0307">
    <property type="taxonomic scope" value="Eukaryota"/>
</dbReference>
<dbReference type="HOGENOM" id="CLU_003033_2_0_1"/>
<dbReference type="InParanoid" id="A5DTX3"/>
<dbReference type="OMA" id="CITSEVF"/>
<dbReference type="OrthoDB" id="542917at2759"/>
<dbReference type="Proteomes" id="UP000001996">
    <property type="component" value="Unassembled WGS sequence"/>
</dbReference>
<dbReference type="GO" id="GO:0030127">
    <property type="term" value="C:COPII vesicle coat"/>
    <property type="evidence" value="ECO:0007669"/>
    <property type="project" value="TreeGrafter"/>
</dbReference>
<dbReference type="GO" id="GO:0070971">
    <property type="term" value="C:endoplasmic reticulum exit site"/>
    <property type="evidence" value="ECO:0007669"/>
    <property type="project" value="TreeGrafter"/>
</dbReference>
<dbReference type="GO" id="GO:0005789">
    <property type="term" value="C:endoplasmic reticulum membrane"/>
    <property type="evidence" value="ECO:0007669"/>
    <property type="project" value="UniProtKB-SubCell"/>
</dbReference>
<dbReference type="GO" id="GO:0005198">
    <property type="term" value="F:structural molecule activity"/>
    <property type="evidence" value="ECO:0007669"/>
    <property type="project" value="TreeGrafter"/>
</dbReference>
<dbReference type="GO" id="GO:0090110">
    <property type="term" value="P:COPII-coated vesicle cargo loading"/>
    <property type="evidence" value="ECO:0007669"/>
    <property type="project" value="TreeGrafter"/>
</dbReference>
<dbReference type="GO" id="GO:0007029">
    <property type="term" value="P:endoplasmic reticulum organization"/>
    <property type="evidence" value="ECO:0007669"/>
    <property type="project" value="TreeGrafter"/>
</dbReference>
<dbReference type="GO" id="GO:0015031">
    <property type="term" value="P:protein transport"/>
    <property type="evidence" value="ECO:0007669"/>
    <property type="project" value="UniProtKB-KW"/>
</dbReference>
<dbReference type="FunFam" id="2.130.10.10:FF:000526">
    <property type="entry name" value="Protein transport protein SEC31"/>
    <property type="match status" value="1"/>
</dbReference>
<dbReference type="Gene3D" id="1.25.40.1030">
    <property type="match status" value="1"/>
</dbReference>
<dbReference type="Gene3D" id="2.130.10.10">
    <property type="entry name" value="YVTN repeat-like/Quinoprotein amine dehydrogenase"/>
    <property type="match status" value="1"/>
</dbReference>
<dbReference type="InterPro" id="IPR040251">
    <property type="entry name" value="SEC31-like"/>
</dbReference>
<dbReference type="InterPro" id="IPR015943">
    <property type="entry name" value="WD40/YVTN_repeat-like_dom_sf"/>
</dbReference>
<dbReference type="InterPro" id="IPR019775">
    <property type="entry name" value="WD40_repeat_CS"/>
</dbReference>
<dbReference type="InterPro" id="IPR036322">
    <property type="entry name" value="WD40_repeat_dom_sf"/>
</dbReference>
<dbReference type="InterPro" id="IPR001680">
    <property type="entry name" value="WD40_rpt"/>
</dbReference>
<dbReference type="PANTHER" id="PTHR13923">
    <property type="entry name" value="SEC31-RELATED PROTEIN"/>
    <property type="match status" value="1"/>
</dbReference>
<dbReference type="PANTHER" id="PTHR13923:SF11">
    <property type="entry name" value="SECRETORY 31, ISOFORM D"/>
    <property type="match status" value="1"/>
</dbReference>
<dbReference type="Pfam" id="PF00400">
    <property type="entry name" value="WD40"/>
    <property type="match status" value="2"/>
</dbReference>
<dbReference type="SMART" id="SM00320">
    <property type="entry name" value="WD40"/>
    <property type="match status" value="6"/>
</dbReference>
<dbReference type="SUPFAM" id="SSF50978">
    <property type="entry name" value="WD40 repeat-like"/>
    <property type="match status" value="1"/>
</dbReference>
<dbReference type="PROSITE" id="PS00678">
    <property type="entry name" value="WD_REPEATS_1"/>
    <property type="match status" value="2"/>
</dbReference>
<dbReference type="PROSITE" id="PS50082">
    <property type="entry name" value="WD_REPEATS_2"/>
    <property type="match status" value="2"/>
</dbReference>
<dbReference type="PROSITE" id="PS50294">
    <property type="entry name" value="WD_REPEATS_REGION"/>
    <property type="match status" value="1"/>
</dbReference>
<feature type="chain" id="PRO_0000295439" description="Protein transport protein SEC31">
    <location>
        <begin position="1"/>
        <end position="953"/>
    </location>
</feature>
<feature type="repeat" description="WD 1">
    <location>
        <begin position="6"/>
        <end position="46"/>
    </location>
</feature>
<feature type="repeat" description="WD 2">
    <location>
        <begin position="61"/>
        <end position="105"/>
    </location>
</feature>
<feature type="repeat" description="WD 3">
    <location>
        <begin position="117"/>
        <end position="157"/>
    </location>
</feature>
<feature type="repeat" description="WD 4">
    <location>
        <begin position="163"/>
        <end position="203"/>
    </location>
</feature>
<feature type="repeat" description="WD 5">
    <location>
        <begin position="210"/>
        <end position="253"/>
    </location>
</feature>
<feature type="repeat" description="WD 6">
    <location>
        <begin position="257"/>
        <end position="297"/>
    </location>
</feature>
<feature type="repeat" description="WD 7">
    <location>
        <begin position="300"/>
        <end position="340"/>
    </location>
</feature>
<feature type="repeat" description="WD 8; interaction with SEC13" evidence="2">
    <location>
        <begin position="382"/>
        <end position="405"/>
    </location>
</feature>
<feature type="region of interest" description="Disordered" evidence="3">
    <location>
        <begin position="459"/>
        <end position="530"/>
    </location>
</feature>
<feature type="region of interest" description="Disordered" evidence="3">
    <location>
        <begin position="860"/>
        <end position="953"/>
    </location>
</feature>
<feature type="compositionally biased region" description="Acidic residues" evidence="3">
    <location>
        <begin position="463"/>
        <end position="472"/>
    </location>
</feature>
<feature type="compositionally biased region" description="Basic and acidic residues" evidence="3">
    <location>
        <begin position="473"/>
        <end position="506"/>
    </location>
</feature>
<feature type="compositionally biased region" description="Polar residues" evidence="3">
    <location>
        <begin position="860"/>
        <end position="887"/>
    </location>
</feature>
<feature type="compositionally biased region" description="Basic and acidic residues" evidence="3">
    <location>
        <begin position="941"/>
        <end position="953"/>
    </location>
</feature>
<reference key="1">
    <citation type="journal article" date="2009" name="Nature">
        <title>Evolution of pathogenicity and sexual reproduction in eight Candida genomes.</title>
        <authorList>
            <person name="Butler G."/>
            <person name="Rasmussen M.D."/>
            <person name="Lin M.F."/>
            <person name="Santos M.A.S."/>
            <person name="Sakthikumar S."/>
            <person name="Munro C.A."/>
            <person name="Rheinbay E."/>
            <person name="Grabherr M."/>
            <person name="Forche A."/>
            <person name="Reedy J.L."/>
            <person name="Agrafioti I."/>
            <person name="Arnaud M.B."/>
            <person name="Bates S."/>
            <person name="Brown A.J.P."/>
            <person name="Brunke S."/>
            <person name="Costanzo M.C."/>
            <person name="Fitzpatrick D.A."/>
            <person name="de Groot P.W.J."/>
            <person name="Harris D."/>
            <person name="Hoyer L.L."/>
            <person name="Hube B."/>
            <person name="Klis F.M."/>
            <person name="Kodira C."/>
            <person name="Lennard N."/>
            <person name="Logue M.E."/>
            <person name="Martin R."/>
            <person name="Neiman A.M."/>
            <person name="Nikolaou E."/>
            <person name="Quail M.A."/>
            <person name="Quinn J."/>
            <person name="Santos M.C."/>
            <person name="Schmitzberger F.F."/>
            <person name="Sherlock G."/>
            <person name="Shah P."/>
            <person name="Silverstein K.A.T."/>
            <person name="Skrzypek M.S."/>
            <person name="Soll D."/>
            <person name="Staggs R."/>
            <person name="Stansfield I."/>
            <person name="Stumpf M.P.H."/>
            <person name="Sudbery P.E."/>
            <person name="Srikantha T."/>
            <person name="Zeng Q."/>
            <person name="Berman J."/>
            <person name="Berriman M."/>
            <person name="Heitman J."/>
            <person name="Gow N.A.R."/>
            <person name="Lorenz M.C."/>
            <person name="Birren B.W."/>
            <person name="Kellis M."/>
            <person name="Cuomo C.A."/>
        </authorList>
    </citation>
    <scope>NUCLEOTIDE SEQUENCE [LARGE SCALE GENOMIC DNA]</scope>
    <source>
        <strain>ATCC 11503 / BCRC 21390 / CBS 2605 / JCM 1781 / NBRC 1676 / NRRL YB-4239</strain>
    </source>
</reference>
<keyword id="KW-0968">Cytoplasmic vesicle</keyword>
<keyword id="KW-0256">Endoplasmic reticulum</keyword>
<keyword id="KW-0931">ER-Golgi transport</keyword>
<keyword id="KW-0472">Membrane</keyword>
<keyword id="KW-0653">Protein transport</keyword>
<keyword id="KW-1185">Reference proteome</keyword>
<keyword id="KW-0677">Repeat</keyword>
<keyword id="KW-0813">Transport</keyword>
<keyword id="KW-0853">WD repeat</keyword>